<organism>
    <name type="scientific">Paraburkholderia phytofirmans (strain DSM 17436 / LMG 22146 / PsJN)</name>
    <name type="common">Burkholderia phytofirmans</name>
    <dbReference type="NCBI Taxonomy" id="398527"/>
    <lineage>
        <taxon>Bacteria</taxon>
        <taxon>Pseudomonadati</taxon>
        <taxon>Pseudomonadota</taxon>
        <taxon>Betaproteobacteria</taxon>
        <taxon>Burkholderiales</taxon>
        <taxon>Burkholderiaceae</taxon>
        <taxon>Paraburkholderia</taxon>
    </lineage>
</organism>
<sequence>MAKKIIGFIKLQIPAGKANPSPPVGPALGQRGLNIMEFCKAFNAQTQALEPGLPTPVVITAFADKSFTFVLKTPPATVLIKKAAKIDKGSSKPHTDKVGKITRAQAEDIAKTKMPDLTAADLDAAVRTIAGSARSMGITVEGV</sequence>
<accession>B2T763</accession>
<keyword id="KW-0488">Methylation</keyword>
<keyword id="KW-0687">Ribonucleoprotein</keyword>
<keyword id="KW-0689">Ribosomal protein</keyword>
<keyword id="KW-0694">RNA-binding</keyword>
<keyword id="KW-0699">rRNA-binding</keyword>
<name>RL11_PARPJ</name>
<evidence type="ECO:0000255" key="1">
    <source>
        <dbReference type="HAMAP-Rule" id="MF_00736"/>
    </source>
</evidence>
<evidence type="ECO:0000305" key="2"/>
<proteinExistence type="inferred from homology"/>
<protein>
    <recommendedName>
        <fullName evidence="1">Large ribosomal subunit protein uL11</fullName>
    </recommendedName>
    <alternativeName>
        <fullName evidence="2">50S ribosomal protein L11</fullName>
    </alternativeName>
</protein>
<feature type="chain" id="PRO_1000132876" description="Large ribosomal subunit protein uL11">
    <location>
        <begin position="1"/>
        <end position="143"/>
    </location>
</feature>
<gene>
    <name evidence="1" type="primary">rplK</name>
    <name type="ordered locus">Bphyt_3656</name>
</gene>
<comment type="function">
    <text evidence="1">Forms part of the ribosomal stalk which helps the ribosome interact with GTP-bound translation factors.</text>
</comment>
<comment type="subunit">
    <text evidence="1">Part of the ribosomal stalk of the 50S ribosomal subunit. Interacts with L10 and the large rRNA to form the base of the stalk. L10 forms an elongated spine to which L12 dimers bind in a sequential fashion forming a multimeric L10(L12)X complex.</text>
</comment>
<comment type="PTM">
    <text evidence="1">One or more lysine residues are methylated.</text>
</comment>
<comment type="similarity">
    <text evidence="1">Belongs to the universal ribosomal protein uL11 family.</text>
</comment>
<dbReference type="EMBL" id="CP001052">
    <property type="protein sequence ID" value="ACD18046.1"/>
    <property type="molecule type" value="Genomic_DNA"/>
</dbReference>
<dbReference type="RefSeq" id="WP_012434578.1">
    <property type="nucleotide sequence ID" value="NC_010681.1"/>
</dbReference>
<dbReference type="SMR" id="B2T763"/>
<dbReference type="STRING" id="398527.Bphyt_3656"/>
<dbReference type="GeneID" id="97311153"/>
<dbReference type="KEGG" id="bpy:Bphyt_3656"/>
<dbReference type="eggNOG" id="COG0080">
    <property type="taxonomic scope" value="Bacteria"/>
</dbReference>
<dbReference type="HOGENOM" id="CLU_074237_2_0_4"/>
<dbReference type="OrthoDB" id="9802408at2"/>
<dbReference type="Proteomes" id="UP000001739">
    <property type="component" value="Chromosome 1"/>
</dbReference>
<dbReference type="GO" id="GO:0022625">
    <property type="term" value="C:cytosolic large ribosomal subunit"/>
    <property type="evidence" value="ECO:0007669"/>
    <property type="project" value="TreeGrafter"/>
</dbReference>
<dbReference type="GO" id="GO:0070180">
    <property type="term" value="F:large ribosomal subunit rRNA binding"/>
    <property type="evidence" value="ECO:0007669"/>
    <property type="project" value="UniProtKB-UniRule"/>
</dbReference>
<dbReference type="GO" id="GO:0003735">
    <property type="term" value="F:structural constituent of ribosome"/>
    <property type="evidence" value="ECO:0007669"/>
    <property type="project" value="InterPro"/>
</dbReference>
<dbReference type="GO" id="GO:0006412">
    <property type="term" value="P:translation"/>
    <property type="evidence" value="ECO:0007669"/>
    <property type="project" value="UniProtKB-UniRule"/>
</dbReference>
<dbReference type="CDD" id="cd00349">
    <property type="entry name" value="Ribosomal_L11"/>
    <property type="match status" value="1"/>
</dbReference>
<dbReference type="FunFam" id="1.10.10.250:FF:000001">
    <property type="entry name" value="50S ribosomal protein L11"/>
    <property type="match status" value="1"/>
</dbReference>
<dbReference type="FunFam" id="3.30.1550.10:FF:000001">
    <property type="entry name" value="50S ribosomal protein L11"/>
    <property type="match status" value="1"/>
</dbReference>
<dbReference type="Gene3D" id="1.10.10.250">
    <property type="entry name" value="Ribosomal protein L11, C-terminal domain"/>
    <property type="match status" value="1"/>
</dbReference>
<dbReference type="Gene3D" id="3.30.1550.10">
    <property type="entry name" value="Ribosomal protein L11/L12, N-terminal domain"/>
    <property type="match status" value="1"/>
</dbReference>
<dbReference type="HAMAP" id="MF_00736">
    <property type="entry name" value="Ribosomal_uL11"/>
    <property type="match status" value="1"/>
</dbReference>
<dbReference type="InterPro" id="IPR000911">
    <property type="entry name" value="Ribosomal_uL11"/>
</dbReference>
<dbReference type="InterPro" id="IPR006519">
    <property type="entry name" value="Ribosomal_uL11_bac-typ"/>
</dbReference>
<dbReference type="InterPro" id="IPR020783">
    <property type="entry name" value="Ribosomal_uL11_C"/>
</dbReference>
<dbReference type="InterPro" id="IPR036769">
    <property type="entry name" value="Ribosomal_uL11_C_sf"/>
</dbReference>
<dbReference type="InterPro" id="IPR020785">
    <property type="entry name" value="Ribosomal_uL11_CS"/>
</dbReference>
<dbReference type="InterPro" id="IPR020784">
    <property type="entry name" value="Ribosomal_uL11_N"/>
</dbReference>
<dbReference type="InterPro" id="IPR036796">
    <property type="entry name" value="Ribosomal_uL11_N_sf"/>
</dbReference>
<dbReference type="NCBIfam" id="TIGR01632">
    <property type="entry name" value="L11_bact"/>
    <property type="match status" value="1"/>
</dbReference>
<dbReference type="PANTHER" id="PTHR11661">
    <property type="entry name" value="60S RIBOSOMAL PROTEIN L12"/>
    <property type="match status" value="1"/>
</dbReference>
<dbReference type="PANTHER" id="PTHR11661:SF1">
    <property type="entry name" value="LARGE RIBOSOMAL SUBUNIT PROTEIN UL11M"/>
    <property type="match status" value="1"/>
</dbReference>
<dbReference type="Pfam" id="PF00298">
    <property type="entry name" value="Ribosomal_L11"/>
    <property type="match status" value="1"/>
</dbReference>
<dbReference type="Pfam" id="PF03946">
    <property type="entry name" value="Ribosomal_L11_N"/>
    <property type="match status" value="1"/>
</dbReference>
<dbReference type="SMART" id="SM00649">
    <property type="entry name" value="RL11"/>
    <property type="match status" value="1"/>
</dbReference>
<dbReference type="SUPFAM" id="SSF54747">
    <property type="entry name" value="Ribosomal L11/L12e N-terminal domain"/>
    <property type="match status" value="1"/>
</dbReference>
<dbReference type="SUPFAM" id="SSF46906">
    <property type="entry name" value="Ribosomal protein L11, C-terminal domain"/>
    <property type="match status" value="1"/>
</dbReference>
<dbReference type="PROSITE" id="PS00359">
    <property type="entry name" value="RIBOSOMAL_L11"/>
    <property type="match status" value="1"/>
</dbReference>
<reference key="1">
    <citation type="journal article" date="2011" name="J. Bacteriol.">
        <title>Complete genome sequence of the plant growth-promoting endophyte Burkholderia phytofirmans strain PsJN.</title>
        <authorList>
            <person name="Weilharter A."/>
            <person name="Mitter B."/>
            <person name="Shin M.V."/>
            <person name="Chain P.S."/>
            <person name="Nowak J."/>
            <person name="Sessitsch A."/>
        </authorList>
    </citation>
    <scope>NUCLEOTIDE SEQUENCE [LARGE SCALE GENOMIC DNA]</scope>
    <source>
        <strain>DSM 17436 / LMG 22146 / PsJN</strain>
    </source>
</reference>